<keyword id="KW-1185">Reference proteome</keyword>
<evidence type="ECO:0000255" key="1">
    <source>
        <dbReference type="HAMAP-Rule" id="MF_01861"/>
    </source>
</evidence>
<reference key="1">
    <citation type="journal article" date="2005" name="J. Bacteriol.">
        <title>Insights on evolution of virulence and resistance from the complete genome analysis of an early methicillin-resistant Staphylococcus aureus strain and a biofilm-producing methicillin-resistant Staphylococcus epidermidis strain.</title>
        <authorList>
            <person name="Gill S.R."/>
            <person name="Fouts D.E."/>
            <person name="Archer G.L."/>
            <person name="Mongodin E.F."/>
            <person name="DeBoy R.T."/>
            <person name="Ravel J."/>
            <person name="Paulsen I.T."/>
            <person name="Kolonay J.F."/>
            <person name="Brinkac L.M."/>
            <person name="Beanan M.J."/>
            <person name="Dodson R.J."/>
            <person name="Daugherty S.C."/>
            <person name="Madupu R."/>
            <person name="Angiuoli S.V."/>
            <person name="Durkin A.S."/>
            <person name="Haft D.H."/>
            <person name="Vamathevan J.J."/>
            <person name="Khouri H."/>
            <person name="Utterback T.R."/>
            <person name="Lee C."/>
            <person name="Dimitrov G."/>
            <person name="Jiang L."/>
            <person name="Qin H."/>
            <person name="Weidman J."/>
            <person name="Tran K."/>
            <person name="Kang K.H."/>
            <person name="Hance I.R."/>
            <person name="Nelson K.E."/>
            <person name="Fraser C.M."/>
        </authorList>
    </citation>
    <scope>NUCLEOTIDE SEQUENCE [LARGE SCALE GENOMIC DNA]</scope>
    <source>
        <strain>ATCC 35984 / DSM 28319 / BCRC 17069 / CCUG 31568 / BM 3577 / RP62A</strain>
    </source>
</reference>
<accession>Q5HQG4</accession>
<protein>
    <recommendedName>
        <fullName evidence="1">UPF0738 protein SERP0585</fullName>
    </recommendedName>
</protein>
<dbReference type="EMBL" id="CP000029">
    <property type="protein sequence ID" value="AAW53994.1"/>
    <property type="molecule type" value="Genomic_DNA"/>
</dbReference>
<dbReference type="RefSeq" id="WP_002457169.1">
    <property type="nucleotide sequence ID" value="NC_002976.3"/>
</dbReference>
<dbReference type="STRING" id="176279.SERP0585"/>
<dbReference type="KEGG" id="ser:SERP0585"/>
<dbReference type="eggNOG" id="ENOG5032YMN">
    <property type="taxonomic scope" value="Bacteria"/>
</dbReference>
<dbReference type="HOGENOM" id="CLU_142282_0_0_9"/>
<dbReference type="Proteomes" id="UP000000531">
    <property type="component" value="Chromosome"/>
</dbReference>
<dbReference type="HAMAP" id="MF_01861">
    <property type="entry name" value="UPF0738"/>
    <property type="match status" value="1"/>
</dbReference>
<dbReference type="InterPro" id="IPR020908">
    <property type="entry name" value="UPF0738"/>
</dbReference>
<dbReference type="Pfam" id="PF19785">
    <property type="entry name" value="UPF0738"/>
    <property type="match status" value="1"/>
</dbReference>
<name>Y585_STAEQ</name>
<sequence>MRIYINEIKLKDDGVYCFSEESTEGLEEVGQMLVDSDNYGFAYLLDDGQSYSYLIFVQETWSMLHENRDKKIIINNHLELKHFQEELDYVLNNIEGNNNYGKEFVSAVEKTFELE</sequence>
<proteinExistence type="inferred from homology"/>
<comment type="similarity">
    <text evidence="1">Belongs to the UPF0738 family.</text>
</comment>
<organism>
    <name type="scientific">Staphylococcus epidermidis (strain ATCC 35984 / DSM 28319 / BCRC 17069 / CCUG 31568 / BM 3577 / RP62A)</name>
    <dbReference type="NCBI Taxonomy" id="176279"/>
    <lineage>
        <taxon>Bacteria</taxon>
        <taxon>Bacillati</taxon>
        <taxon>Bacillota</taxon>
        <taxon>Bacilli</taxon>
        <taxon>Bacillales</taxon>
        <taxon>Staphylococcaceae</taxon>
        <taxon>Staphylococcus</taxon>
    </lineage>
</organism>
<feature type="chain" id="PRO_0000369672" description="UPF0738 protein SERP0585">
    <location>
        <begin position="1"/>
        <end position="115"/>
    </location>
</feature>
<gene>
    <name type="ordered locus">SERP0585</name>
</gene>